<reference key="1">
    <citation type="journal article" date="1989" name="Gene">
        <title>Nucleotide sequence of the right early region of Bacillus phage phi 15 and comparison with related phages: reorganization of gene 17 during evolution.</title>
        <authorList>
            <person name="Benes V."/>
            <person name="Arnold L."/>
            <person name="Smrt J."/>
            <person name="Paces V."/>
        </authorList>
    </citation>
    <scope>NUCLEOTIDE SEQUENCE [GENOMIC DNA]</scope>
</reference>
<protein>
    <recommendedName>
        <fullName>Gene product 16.6</fullName>
        <shortName>gp16.6</shortName>
    </recommendedName>
    <alternativeName>
        <fullName>Protein p16.6</fullName>
    </alternativeName>
</protein>
<organismHost>
    <name type="scientific">Bacillus subtilis</name>
    <dbReference type="NCBI Taxonomy" id="1423"/>
</organismHost>
<name>GP166_BPPH5</name>
<organism>
    <name type="scientific">Bacillus phage phi15</name>
    <name type="common">Bacteriophage phi-15</name>
    <dbReference type="NCBI Taxonomy" id="10755"/>
    <lineage>
        <taxon>Viruses</taxon>
        <taxon>Duplodnaviria</taxon>
        <taxon>Heunggongvirae</taxon>
        <taxon>Uroviricota</taxon>
        <taxon>Caudoviricetes</taxon>
        <taxon>Salasmaviridae</taxon>
        <taxon>Picovirinae</taxon>
        <taxon>Salasvirus</taxon>
        <taxon>Salasvirus phi29</taxon>
    </lineage>
</organism>
<accession>P15854</accession>
<comment type="similarity">
    <text evidence="1">Belongs to the phi29likevirus gp16.6 family.</text>
</comment>
<dbReference type="EMBL" id="M28830">
    <property type="protein sequence ID" value="AAA32333.1"/>
    <property type="molecule type" value="Genomic_DNA"/>
</dbReference>
<dbReference type="PIR" id="JS0196">
    <property type="entry name" value="WRBPF6"/>
</dbReference>
<keyword id="KW-0244">Early protein</keyword>
<feature type="chain" id="PRO_0000106611" description="Gene product 16.6">
    <location>
        <begin position="1"/>
        <end position="54"/>
    </location>
</feature>
<gene>
    <name type="primary">16.6</name>
</gene>
<sequence length="54" mass="6128">MKLLTHTCHYCSFSFFTRKFDVFGAITKKDTPVVFCPACGNQSLSVSHIEEEII</sequence>
<proteinExistence type="inferred from homology"/>
<evidence type="ECO:0000305" key="1"/>